<reference key="1">
    <citation type="submission" date="2006-12" db="EMBL/GenBank/DDBJ databases">
        <title>Complete sequence of chromosome 1 of Nocardioides sp. JS614.</title>
        <authorList>
            <person name="Copeland A."/>
            <person name="Lucas S."/>
            <person name="Lapidus A."/>
            <person name="Barry K."/>
            <person name="Detter J.C."/>
            <person name="Glavina del Rio T."/>
            <person name="Hammon N."/>
            <person name="Israni S."/>
            <person name="Dalin E."/>
            <person name="Tice H."/>
            <person name="Pitluck S."/>
            <person name="Thompson L.S."/>
            <person name="Brettin T."/>
            <person name="Bruce D."/>
            <person name="Han C."/>
            <person name="Tapia R."/>
            <person name="Schmutz J."/>
            <person name="Larimer F."/>
            <person name="Land M."/>
            <person name="Hauser L."/>
            <person name="Kyrpides N."/>
            <person name="Kim E."/>
            <person name="Mattes T."/>
            <person name="Gossett J."/>
            <person name="Richardson P."/>
        </authorList>
    </citation>
    <scope>NUCLEOTIDE SEQUENCE [LARGE SCALE GENOMIC DNA]</scope>
    <source>
        <strain>ATCC BAA-499 / JS614</strain>
    </source>
</reference>
<keyword id="KW-0520">NAD</keyword>
<keyword id="KW-0560">Oxidoreductase</keyword>
<keyword id="KW-1185">Reference proteome</keyword>
<keyword id="KW-0816">Tricarboxylic acid cycle</keyword>
<dbReference type="EC" id="1.1.1.37" evidence="1"/>
<dbReference type="EMBL" id="CP000509">
    <property type="protein sequence ID" value="ABL83078.1"/>
    <property type="molecule type" value="Genomic_DNA"/>
</dbReference>
<dbReference type="RefSeq" id="WP_011757009.1">
    <property type="nucleotide sequence ID" value="NC_008699.1"/>
</dbReference>
<dbReference type="SMR" id="A1SMP3"/>
<dbReference type="STRING" id="196162.Noca_3578"/>
<dbReference type="KEGG" id="nca:Noca_3578"/>
<dbReference type="eggNOG" id="COG0039">
    <property type="taxonomic scope" value="Bacteria"/>
</dbReference>
<dbReference type="HOGENOM" id="CLU_040727_2_0_11"/>
<dbReference type="OrthoDB" id="9802969at2"/>
<dbReference type="Proteomes" id="UP000000640">
    <property type="component" value="Chromosome"/>
</dbReference>
<dbReference type="GO" id="GO:0030060">
    <property type="term" value="F:L-malate dehydrogenase (NAD+) activity"/>
    <property type="evidence" value="ECO:0007669"/>
    <property type="project" value="UniProtKB-UniRule"/>
</dbReference>
<dbReference type="GO" id="GO:0006108">
    <property type="term" value="P:malate metabolic process"/>
    <property type="evidence" value="ECO:0007669"/>
    <property type="project" value="InterPro"/>
</dbReference>
<dbReference type="GO" id="GO:0006099">
    <property type="term" value="P:tricarboxylic acid cycle"/>
    <property type="evidence" value="ECO:0007669"/>
    <property type="project" value="UniProtKB-UniRule"/>
</dbReference>
<dbReference type="CDD" id="cd01338">
    <property type="entry name" value="MDH_chloroplast-like"/>
    <property type="match status" value="1"/>
</dbReference>
<dbReference type="FunFam" id="3.40.50.720:FF:000010">
    <property type="entry name" value="Malate dehydrogenase"/>
    <property type="match status" value="1"/>
</dbReference>
<dbReference type="FunFam" id="3.90.110.10:FF:000002">
    <property type="entry name" value="Malate dehydrogenase"/>
    <property type="match status" value="1"/>
</dbReference>
<dbReference type="Gene3D" id="3.90.110.10">
    <property type="entry name" value="Lactate dehydrogenase/glycoside hydrolase, family 4, C-terminal"/>
    <property type="match status" value="1"/>
</dbReference>
<dbReference type="Gene3D" id="3.40.50.720">
    <property type="entry name" value="NAD(P)-binding Rossmann-like Domain"/>
    <property type="match status" value="1"/>
</dbReference>
<dbReference type="HAMAP" id="MF_01517">
    <property type="entry name" value="Malate_dehydrog_2"/>
    <property type="match status" value="1"/>
</dbReference>
<dbReference type="InterPro" id="IPR001557">
    <property type="entry name" value="L-lactate/malate_DH"/>
</dbReference>
<dbReference type="InterPro" id="IPR022383">
    <property type="entry name" value="Lactate/malate_DH_C"/>
</dbReference>
<dbReference type="InterPro" id="IPR001236">
    <property type="entry name" value="Lactate/malate_DH_N"/>
</dbReference>
<dbReference type="InterPro" id="IPR015955">
    <property type="entry name" value="Lactate_DH/Glyco_Ohase_4_C"/>
</dbReference>
<dbReference type="InterPro" id="IPR001252">
    <property type="entry name" value="Malate_DH_AS"/>
</dbReference>
<dbReference type="InterPro" id="IPR010945">
    <property type="entry name" value="Malate_DH_type2"/>
</dbReference>
<dbReference type="InterPro" id="IPR036291">
    <property type="entry name" value="NAD(P)-bd_dom_sf"/>
</dbReference>
<dbReference type="NCBIfam" id="TIGR01759">
    <property type="entry name" value="MalateDH-SF1"/>
    <property type="match status" value="1"/>
</dbReference>
<dbReference type="NCBIfam" id="NF003916">
    <property type="entry name" value="PRK05442.1"/>
    <property type="match status" value="1"/>
</dbReference>
<dbReference type="PANTHER" id="PTHR23382">
    <property type="entry name" value="MALATE DEHYDROGENASE"/>
    <property type="match status" value="1"/>
</dbReference>
<dbReference type="Pfam" id="PF02866">
    <property type="entry name" value="Ldh_1_C"/>
    <property type="match status" value="1"/>
</dbReference>
<dbReference type="Pfam" id="PF00056">
    <property type="entry name" value="Ldh_1_N"/>
    <property type="match status" value="1"/>
</dbReference>
<dbReference type="PIRSF" id="PIRSF000102">
    <property type="entry name" value="Lac_mal_DH"/>
    <property type="match status" value="1"/>
</dbReference>
<dbReference type="SUPFAM" id="SSF56327">
    <property type="entry name" value="LDH C-terminal domain-like"/>
    <property type="match status" value="1"/>
</dbReference>
<dbReference type="SUPFAM" id="SSF51735">
    <property type="entry name" value="NAD(P)-binding Rossmann-fold domains"/>
    <property type="match status" value="1"/>
</dbReference>
<dbReference type="PROSITE" id="PS00068">
    <property type="entry name" value="MDH"/>
    <property type="match status" value="1"/>
</dbReference>
<organism>
    <name type="scientific">Nocardioides sp. (strain ATCC BAA-499 / JS614)</name>
    <dbReference type="NCBI Taxonomy" id="196162"/>
    <lineage>
        <taxon>Bacteria</taxon>
        <taxon>Bacillati</taxon>
        <taxon>Actinomycetota</taxon>
        <taxon>Actinomycetes</taxon>
        <taxon>Propionibacteriales</taxon>
        <taxon>Nocardioidaceae</taxon>
        <taxon>Nocardioides</taxon>
    </lineage>
</organism>
<sequence length="328" mass="34261">MSSTPLKVAVTGAAGQIGYSLLFRLASGSLLGDRPIELRLLEITPALKALEGVVMELDDCAFPNLAGVQIGDDAEQIFDGVNLALLVGARPRGPGMERGDLLSANGAIFTAQGKALNKVAADDVRIGVTGNPANTNALIAMTNAPDIPQARFSALTRLDHNRAISQLAAKTGAAVTDIKKMTIWGNHSATQYPDVFHAEIGGRNAAEVVGDQDWIESTFIPTVAKRGAAIIEARGSSSAASAASATIDAARDWLFGSADADWVSMAVVSDGSYGVPEGLISSFPVTTKDGDWEIVQGLEIDDFSRAKIDASTAELADEREAVKELGLI</sequence>
<gene>
    <name evidence="1" type="primary">mdh</name>
    <name type="ordered locus">Noca_3578</name>
</gene>
<name>MDH_NOCSJ</name>
<protein>
    <recommendedName>
        <fullName evidence="1">Malate dehydrogenase</fullName>
        <ecNumber evidence="1">1.1.1.37</ecNumber>
    </recommendedName>
</protein>
<proteinExistence type="inferred from homology"/>
<accession>A1SMP3</accession>
<comment type="function">
    <text evidence="1">Catalyzes the reversible oxidation of malate to oxaloacetate.</text>
</comment>
<comment type="catalytic activity">
    <reaction evidence="1">
        <text>(S)-malate + NAD(+) = oxaloacetate + NADH + H(+)</text>
        <dbReference type="Rhea" id="RHEA:21432"/>
        <dbReference type="ChEBI" id="CHEBI:15378"/>
        <dbReference type="ChEBI" id="CHEBI:15589"/>
        <dbReference type="ChEBI" id="CHEBI:16452"/>
        <dbReference type="ChEBI" id="CHEBI:57540"/>
        <dbReference type="ChEBI" id="CHEBI:57945"/>
        <dbReference type="EC" id="1.1.1.37"/>
    </reaction>
</comment>
<comment type="similarity">
    <text evidence="1">Belongs to the LDH/MDH superfamily. MDH type 2 family.</text>
</comment>
<evidence type="ECO:0000255" key="1">
    <source>
        <dbReference type="HAMAP-Rule" id="MF_01517"/>
    </source>
</evidence>
<feature type="chain" id="PRO_0000294397" description="Malate dehydrogenase">
    <location>
        <begin position="1"/>
        <end position="328"/>
    </location>
</feature>
<feature type="active site" description="Proton acceptor" evidence="1">
    <location>
        <position position="187"/>
    </location>
</feature>
<feature type="binding site" evidence="1">
    <location>
        <begin position="12"/>
        <end position="18"/>
    </location>
    <ligand>
        <name>NAD(+)</name>
        <dbReference type="ChEBI" id="CHEBI:57540"/>
    </ligand>
</feature>
<feature type="binding site" evidence="1">
    <location>
        <position position="92"/>
    </location>
    <ligand>
        <name>substrate</name>
    </ligand>
</feature>
<feature type="binding site" evidence="1">
    <location>
        <position position="98"/>
    </location>
    <ligand>
        <name>substrate</name>
    </ligand>
</feature>
<feature type="binding site" evidence="1">
    <location>
        <position position="105"/>
    </location>
    <ligand>
        <name>NAD(+)</name>
        <dbReference type="ChEBI" id="CHEBI:57540"/>
    </ligand>
</feature>
<feature type="binding site" evidence="1">
    <location>
        <position position="112"/>
    </location>
    <ligand>
        <name>NAD(+)</name>
        <dbReference type="ChEBI" id="CHEBI:57540"/>
    </ligand>
</feature>
<feature type="binding site" evidence="1">
    <location>
        <begin position="129"/>
        <end position="131"/>
    </location>
    <ligand>
        <name>NAD(+)</name>
        <dbReference type="ChEBI" id="CHEBI:57540"/>
    </ligand>
</feature>
<feature type="binding site" evidence="1">
    <location>
        <position position="131"/>
    </location>
    <ligand>
        <name>substrate</name>
    </ligand>
</feature>
<feature type="binding site" evidence="1">
    <location>
        <position position="162"/>
    </location>
    <ligand>
        <name>substrate</name>
    </ligand>
</feature>